<comment type="similarity">
    <text evidence="1">Belongs to the universal ribosomal protein uS2 family.</text>
</comment>
<evidence type="ECO:0000255" key="1">
    <source>
        <dbReference type="HAMAP-Rule" id="MF_00291"/>
    </source>
</evidence>
<evidence type="ECO:0000305" key="2"/>
<name>RS2_ENDTX</name>
<proteinExistence type="inferred from homology"/>
<gene>
    <name evidence="1" type="primary">rpsB</name>
    <name type="ordered locus">TGRD_402</name>
</gene>
<sequence length="244" mass="27700">MANITMKALLEAGVHFGHQTRRWNPKMAKFIFGMRNKIHIIDLQKTLKELKKNYKVVRDFTSTGKDIIFVGTKKQARLPIKEEALRCGAYFVSERWLGGTLTNFETLKKSITRYKEIEDMKETGVFKLLSKKEQSRIEKERIKLEKSLEGLKNMSSLPGLMFVVDSHEETTAILEARKLEIPIVAVCDTNCNPDLVDYPIPGNDDAIRAVKLFCTVIADAVLEGKSIIGKQEDNKVKEAAIEVK</sequence>
<organism>
    <name type="scientific">Endomicrobium trichonymphae</name>
    <dbReference type="NCBI Taxonomy" id="1408204"/>
    <lineage>
        <taxon>Bacteria</taxon>
        <taxon>Pseudomonadati</taxon>
        <taxon>Elusimicrobiota</taxon>
        <taxon>Endomicrobiia</taxon>
        <taxon>Endomicrobiales</taxon>
        <taxon>Endomicrobiaceae</taxon>
        <taxon>Candidatus Endomicrobiellum</taxon>
    </lineage>
</organism>
<keyword id="KW-0687">Ribonucleoprotein</keyword>
<keyword id="KW-0689">Ribosomal protein</keyword>
<protein>
    <recommendedName>
        <fullName evidence="1">Small ribosomal subunit protein uS2</fullName>
    </recommendedName>
    <alternativeName>
        <fullName evidence="2">30S ribosomal protein S2</fullName>
    </alternativeName>
</protein>
<feature type="chain" id="PRO_1000115071" description="Small ribosomal subunit protein uS2">
    <location>
        <begin position="1"/>
        <end position="244"/>
    </location>
</feature>
<dbReference type="EMBL" id="AP009510">
    <property type="protein sequence ID" value="BAG13885.1"/>
    <property type="molecule type" value="Genomic_DNA"/>
</dbReference>
<dbReference type="RefSeq" id="WP_015423411.1">
    <property type="nucleotide sequence ID" value="NC_020419.1"/>
</dbReference>
<dbReference type="SMR" id="B1H053"/>
<dbReference type="STRING" id="471821.TGRD_402"/>
<dbReference type="KEGG" id="rsd:TGRD_402"/>
<dbReference type="PATRIC" id="fig|471821.5.peg.655"/>
<dbReference type="HOGENOM" id="CLU_040318_1_2_0"/>
<dbReference type="Proteomes" id="UP000001691">
    <property type="component" value="Chromosome"/>
</dbReference>
<dbReference type="GO" id="GO:0022627">
    <property type="term" value="C:cytosolic small ribosomal subunit"/>
    <property type="evidence" value="ECO:0007669"/>
    <property type="project" value="TreeGrafter"/>
</dbReference>
<dbReference type="GO" id="GO:0003735">
    <property type="term" value="F:structural constituent of ribosome"/>
    <property type="evidence" value="ECO:0007669"/>
    <property type="project" value="InterPro"/>
</dbReference>
<dbReference type="GO" id="GO:0006412">
    <property type="term" value="P:translation"/>
    <property type="evidence" value="ECO:0007669"/>
    <property type="project" value="UniProtKB-UniRule"/>
</dbReference>
<dbReference type="CDD" id="cd01425">
    <property type="entry name" value="RPS2"/>
    <property type="match status" value="1"/>
</dbReference>
<dbReference type="Gene3D" id="3.40.50.10490">
    <property type="entry name" value="Glucose-6-phosphate isomerase like protein, domain 1"/>
    <property type="match status" value="1"/>
</dbReference>
<dbReference type="Gene3D" id="1.10.287.610">
    <property type="entry name" value="Helix hairpin bin"/>
    <property type="match status" value="1"/>
</dbReference>
<dbReference type="HAMAP" id="MF_00291_B">
    <property type="entry name" value="Ribosomal_uS2_B"/>
    <property type="match status" value="1"/>
</dbReference>
<dbReference type="InterPro" id="IPR001865">
    <property type="entry name" value="Ribosomal_uS2"/>
</dbReference>
<dbReference type="InterPro" id="IPR005706">
    <property type="entry name" value="Ribosomal_uS2_bac/mit/plastid"/>
</dbReference>
<dbReference type="InterPro" id="IPR018130">
    <property type="entry name" value="Ribosomal_uS2_CS"/>
</dbReference>
<dbReference type="InterPro" id="IPR023591">
    <property type="entry name" value="Ribosomal_uS2_flav_dom_sf"/>
</dbReference>
<dbReference type="NCBIfam" id="TIGR01011">
    <property type="entry name" value="rpsB_bact"/>
    <property type="match status" value="1"/>
</dbReference>
<dbReference type="PANTHER" id="PTHR12534">
    <property type="entry name" value="30S RIBOSOMAL PROTEIN S2 PROKARYOTIC AND ORGANELLAR"/>
    <property type="match status" value="1"/>
</dbReference>
<dbReference type="PANTHER" id="PTHR12534:SF0">
    <property type="entry name" value="SMALL RIBOSOMAL SUBUNIT PROTEIN US2M"/>
    <property type="match status" value="1"/>
</dbReference>
<dbReference type="Pfam" id="PF00318">
    <property type="entry name" value="Ribosomal_S2"/>
    <property type="match status" value="1"/>
</dbReference>
<dbReference type="PRINTS" id="PR00395">
    <property type="entry name" value="RIBOSOMALS2"/>
</dbReference>
<dbReference type="SUPFAM" id="SSF52313">
    <property type="entry name" value="Ribosomal protein S2"/>
    <property type="match status" value="1"/>
</dbReference>
<dbReference type="PROSITE" id="PS00962">
    <property type="entry name" value="RIBOSOMAL_S2_1"/>
    <property type="match status" value="1"/>
</dbReference>
<accession>B1H053</accession>
<reference key="1">
    <citation type="journal article" date="2008" name="Proc. Natl. Acad. Sci. U.S.A.">
        <title>Complete genome of the uncultured termite group 1 bacteria in a single host protist cell.</title>
        <authorList>
            <person name="Hongoh Y."/>
            <person name="Sharma V.K."/>
            <person name="Prakash T."/>
            <person name="Noda S."/>
            <person name="Taylor T.D."/>
            <person name="Kudo T."/>
            <person name="Sakaki Y."/>
            <person name="Toyoda A."/>
            <person name="Hattori M."/>
            <person name="Ohkuma M."/>
        </authorList>
    </citation>
    <scope>NUCLEOTIDE SEQUENCE [LARGE SCALE GENOMIC DNA]</scope>
</reference>